<dbReference type="EC" id="3.1.3.5" evidence="1"/>
<dbReference type="EC" id="3.1.3.6" evidence="1"/>
<dbReference type="EC" id="3.6.1.11" evidence="1"/>
<dbReference type="EMBL" id="CP000038">
    <property type="protein sequence ID" value="AAZ89494.1"/>
    <property type="molecule type" value="Genomic_DNA"/>
</dbReference>
<dbReference type="RefSeq" id="WP_001295182.1">
    <property type="nucleotide sequence ID" value="NC_007384.1"/>
</dbReference>
<dbReference type="SMR" id="Q3YYB8"/>
<dbReference type="GeneID" id="93779262"/>
<dbReference type="KEGG" id="ssn:SSON_2892"/>
<dbReference type="HOGENOM" id="CLU_045192_1_2_6"/>
<dbReference type="Proteomes" id="UP000002529">
    <property type="component" value="Chromosome"/>
</dbReference>
<dbReference type="GO" id="GO:0005737">
    <property type="term" value="C:cytoplasm"/>
    <property type="evidence" value="ECO:0007669"/>
    <property type="project" value="UniProtKB-SubCell"/>
</dbReference>
<dbReference type="GO" id="GO:0008254">
    <property type="term" value="F:3'-nucleotidase activity"/>
    <property type="evidence" value="ECO:0007669"/>
    <property type="project" value="UniProtKB-UniRule"/>
</dbReference>
<dbReference type="GO" id="GO:0008253">
    <property type="term" value="F:5'-nucleotidase activity"/>
    <property type="evidence" value="ECO:0007669"/>
    <property type="project" value="UniProtKB-UniRule"/>
</dbReference>
<dbReference type="GO" id="GO:0004309">
    <property type="term" value="F:exopolyphosphatase activity"/>
    <property type="evidence" value="ECO:0007669"/>
    <property type="project" value="UniProtKB-UniRule"/>
</dbReference>
<dbReference type="GO" id="GO:0046872">
    <property type="term" value="F:metal ion binding"/>
    <property type="evidence" value="ECO:0007669"/>
    <property type="project" value="UniProtKB-UniRule"/>
</dbReference>
<dbReference type="GO" id="GO:0000166">
    <property type="term" value="F:nucleotide binding"/>
    <property type="evidence" value="ECO:0007669"/>
    <property type="project" value="UniProtKB-KW"/>
</dbReference>
<dbReference type="FunFam" id="3.40.1210.10:FF:000001">
    <property type="entry name" value="5'/3'-nucleotidase SurE"/>
    <property type="match status" value="1"/>
</dbReference>
<dbReference type="Gene3D" id="3.40.1210.10">
    <property type="entry name" value="Survival protein SurE-like phosphatase/nucleotidase"/>
    <property type="match status" value="1"/>
</dbReference>
<dbReference type="HAMAP" id="MF_00060">
    <property type="entry name" value="SurE"/>
    <property type="match status" value="1"/>
</dbReference>
<dbReference type="InterPro" id="IPR030048">
    <property type="entry name" value="SurE"/>
</dbReference>
<dbReference type="InterPro" id="IPR002828">
    <property type="entry name" value="SurE-like_Pase/nucleotidase"/>
</dbReference>
<dbReference type="InterPro" id="IPR036523">
    <property type="entry name" value="SurE-like_sf"/>
</dbReference>
<dbReference type="NCBIfam" id="NF001488">
    <property type="entry name" value="PRK00346.1-1"/>
    <property type="match status" value="1"/>
</dbReference>
<dbReference type="NCBIfam" id="NF001489">
    <property type="entry name" value="PRK00346.1-3"/>
    <property type="match status" value="1"/>
</dbReference>
<dbReference type="NCBIfam" id="NF001490">
    <property type="entry name" value="PRK00346.1-4"/>
    <property type="match status" value="1"/>
</dbReference>
<dbReference type="NCBIfam" id="TIGR00087">
    <property type="entry name" value="surE"/>
    <property type="match status" value="1"/>
</dbReference>
<dbReference type="PANTHER" id="PTHR30457">
    <property type="entry name" value="5'-NUCLEOTIDASE SURE"/>
    <property type="match status" value="1"/>
</dbReference>
<dbReference type="PANTHER" id="PTHR30457:SF12">
    <property type="entry name" value="5'_3'-NUCLEOTIDASE SURE"/>
    <property type="match status" value="1"/>
</dbReference>
<dbReference type="Pfam" id="PF01975">
    <property type="entry name" value="SurE"/>
    <property type="match status" value="1"/>
</dbReference>
<dbReference type="SUPFAM" id="SSF64167">
    <property type="entry name" value="SurE-like"/>
    <property type="match status" value="1"/>
</dbReference>
<feature type="chain" id="PRO_0000235651" description="5'/3'-nucleotidase SurE">
    <location>
        <begin position="1"/>
        <end position="253"/>
    </location>
</feature>
<feature type="binding site" evidence="1">
    <location>
        <position position="8"/>
    </location>
    <ligand>
        <name>a divalent metal cation</name>
        <dbReference type="ChEBI" id="CHEBI:60240"/>
    </ligand>
</feature>
<feature type="binding site" evidence="1">
    <location>
        <position position="9"/>
    </location>
    <ligand>
        <name>a divalent metal cation</name>
        <dbReference type="ChEBI" id="CHEBI:60240"/>
    </ligand>
</feature>
<feature type="binding site" evidence="1">
    <location>
        <position position="39"/>
    </location>
    <ligand>
        <name>a divalent metal cation</name>
        <dbReference type="ChEBI" id="CHEBI:60240"/>
    </ligand>
</feature>
<feature type="binding site" evidence="1">
    <location>
        <position position="92"/>
    </location>
    <ligand>
        <name>a divalent metal cation</name>
        <dbReference type="ChEBI" id="CHEBI:60240"/>
    </ligand>
</feature>
<name>SURE_SHISS</name>
<accession>Q3YYB8</accession>
<reference key="1">
    <citation type="journal article" date="2005" name="Nucleic Acids Res.">
        <title>Genome dynamics and diversity of Shigella species, the etiologic agents of bacillary dysentery.</title>
        <authorList>
            <person name="Yang F."/>
            <person name="Yang J."/>
            <person name="Zhang X."/>
            <person name="Chen L."/>
            <person name="Jiang Y."/>
            <person name="Yan Y."/>
            <person name="Tang X."/>
            <person name="Wang J."/>
            <person name="Xiong Z."/>
            <person name="Dong J."/>
            <person name="Xue Y."/>
            <person name="Zhu Y."/>
            <person name="Xu X."/>
            <person name="Sun L."/>
            <person name="Chen S."/>
            <person name="Nie H."/>
            <person name="Peng J."/>
            <person name="Xu J."/>
            <person name="Wang Y."/>
            <person name="Yuan Z."/>
            <person name="Wen Y."/>
            <person name="Yao Z."/>
            <person name="Shen Y."/>
            <person name="Qiang B."/>
            <person name="Hou Y."/>
            <person name="Yu J."/>
            <person name="Jin Q."/>
        </authorList>
    </citation>
    <scope>NUCLEOTIDE SEQUENCE [LARGE SCALE GENOMIC DNA]</scope>
    <source>
        <strain>Ss046</strain>
    </source>
</reference>
<comment type="function">
    <text evidence="1">Nucleotidase with a broad substrate specificity as it can dephosphorylate various ribo- and deoxyribonucleoside 5'-monophosphates and ribonucleoside 3'-monophosphates with highest affinity to 3'-AMP. Also hydrolyzes polyphosphate (exopolyphosphatase activity) with the preference for short-chain-length substrates (P20-25). Might be involved in the regulation of dNTP and NTP pools, and in the turnover of 3'-mononucleotides produced by numerous intracellular RNases (T1, T2, and F) during the degradation of various RNAs.</text>
</comment>
<comment type="catalytic activity">
    <reaction evidence="1">
        <text>a ribonucleoside 5'-phosphate + H2O = a ribonucleoside + phosphate</text>
        <dbReference type="Rhea" id="RHEA:12484"/>
        <dbReference type="ChEBI" id="CHEBI:15377"/>
        <dbReference type="ChEBI" id="CHEBI:18254"/>
        <dbReference type="ChEBI" id="CHEBI:43474"/>
        <dbReference type="ChEBI" id="CHEBI:58043"/>
        <dbReference type="EC" id="3.1.3.5"/>
    </reaction>
</comment>
<comment type="catalytic activity">
    <reaction evidence="1">
        <text>a ribonucleoside 3'-phosphate + H2O = a ribonucleoside + phosphate</text>
        <dbReference type="Rhea" id="RHEA:10144"/>
        <dbReference type="ChEBI" id="CHEBI:13197"/>
        <dbReference type="ChEBI" id="CHEBI:15377"/>
        <dbReference type="ChEBI" id="CHEBI:18254"/>
        <dbReference type="ChEBI" id="CHEBI:43474"/>
        <dbReference type="EC" id="3.1.3.6"/>
    </reaction>
</comment>
<comment type="catalytic activity">
    <reaction evidence="1">
        <text>[phosphate](n) + H2O = [phosphate](n-1) + phosphate + H(+)</text>
        <dbReference type="Rhea" id="RHEA:21528"/>
        <dbReference type="Rhea" id="RHEA-COMP:9859"/>
        <dbReference type="Rhea" id="RHEA-COMP:14279"/>
        <dbReference type="ChEBI" id="CHEBI:15377"/>
        <dbReference type="ChEBI" id="CHEBI:15378"/>
        <dbReference type="ChEBI" id="CHEBI:16838"/>
        <dbReference type="ChEBI" id="CHEBI:43474"/>
        <dbReference type="EC" id="3.6.1.11"/>
    </reaction>
</comment>
<comment type="cofactor">
    <cofactor evidence="1">
        <name>a divalent metal cation</name>
        <dbReference type="ChEBI" id="CHEBI:60240"/>
    </cofactor>
    <text evidence="1">Binds 1 divalent metal cation per subunit.</text>
</comment>
<comment type="subcellular location">
    <subcellularLocation>
        <location evidence="1">Cytoplasm</location>
    </subcellularLocation>
</comment>
<comment type="similarity">
    <text evidence="1">Belongs to the SurE nucleotidase family.</text>
</comment>
<evidence type="ECO:0000255" key="1">
    <source>
        <dbReference type="HAMAP-Rule" id="MF_00060"/>
    </source>
</evidence>
<organism>
    <name type="scientific">Shigella sonnei (strain Ss046)</name>
    <dbReference type="NCBI Taxonomy" id="300269"/>
    <lineage>
        <taxon>Bacteria</taxon>
        <taxon>Pseudomonadati</taxon>
        <taxon>Pseudomonadota</taxon>
        <taxon>Gammaproteobacteria</taxon>
        <taxon>Enterobacterales</taxon>
        <taxon>Enterobacteriaceae</taxon>
        <taxon>Shigella</taxon>
    </lineage>
</organism>
<sequence length="253" mass="26900">MRILLSNDDGVHAPGIQTLAKALREFADVQVVAPDRNRSGASNSLTLESSLRTFTFENGDIAVQMGTPTDCVYLGVNALMRPRPDIVVSGINAGPNLGDDVIYSGTVAAAMEGRHLGFPALAVSLDGHKHYDTAAAVTCSILRALCKEPLRTGRILNINVPDLPLDQIKGIRVTRCGTRHPADQVIPQQDPRGNTLYWIGPPGGKCDAGPGTDFAAVDEGYVSITPLHVDLTAHSAQDVVSDWLNSVGVGTQW</sequence>
<gene>
    <name evidence="1" type="primary">surE</name>
    <name type="ordered locus">SSON_2892</name>
</gene>
<keyword id="KW-0963">Cytoplasm</keyword>
<keyword id="KW-0378">Hydrolase</keyword>
<keyword id="KW-0479">Metal-binding</keyword>
<keyword id="KW-0547">Nucleotide-binding</keyword>
<keyword id="KW-1185">Reference proteome</keyword>
<proteinExistence type="inferred from homology"/>
<protein>
    <recommendedName>
        <fullName evidence="1">5'/3'-nucleotidase SurE</fullName>
        <ecNumber evidence="1">3.1.3.5</ecNumber>
        <ecNumber evidence="1">3.1.3.6</ecNumber>
    </recommendedName>
    <alternativeName>
        <fullName evidence="1">Exopolyphosphatase</fullName>
        <ecNumber evidence="1">3.6.1.11</ecNumber>
    </alternativeName>
    <alternativeName>
        <fullName evidence="1">Nucleoside monophosphate phosphohydrolase</fullName>
    </alternativeName>
</protein>